<evidence type="ECO:0000250" key="1">
    <source>
        <dbReference type="UniProtKB" id="Q9H714"/>
    </source>
</evidence>
<evidence type="ECO:0000256" key="2">
    <source>
        <dbReference type="SAM" id="MobiDB-lite"/>
    </source>
</evidence>
<evidence type="ECO:0000269" key="3">
    <source>
    </source>
</evidence>
<evidence type="ECO:0000303" key="4">
    <source>
    </source>
</evidence>
<evidence type="ECO:0000305" key="5"/>
<evidence type="ECO:0000312" key="6">
    <source>
        <dbReference type="MGI" id="MGI:2685590"/>
    </source>
</evidence>
<gene>
    <name evidence="6" type="primary">Rubcnl</name>
</gene>
<feature type="chain" id="PRO_0000350567" description="Protein associated with UVRAG as autophagy enhancer">
    <location>
        <begin position="1"/>
        <end position="648"/>
    </location>
</feature>
<feature type="region of interest" description="Disordered" evidence="2">
    <location>
        <begin position="131"/>
        <end position="173"/>
    </location>
</feature>
<feature type="region of interest" description="Interaction with UVRAG" evidence="1">
    <location>
        <begin position="183"/>
        <end position="222"/>
    </location>
</feature>
<feature type="compositionally biased region" description="Polar residues" evidence="2">
    <location>
        <begin position="131"/>
        <end position="146"/>
    </location>
</feature>
<feature type="compositionally biased region" description="Polar residues" evidence="2">
    <location>
        <begin position="157"/>
        <end position="173"/>
    </location>
</feature>
<feature type="modified residue" description="Phosphoserine" evidence="1">
    <location>
        <position position="144"/>
    </location>
</feature>
<feature type="modified residue" description="N6-acetyllysine" evidence="1">
    <location>
        <position position="469"/>
    </location>
</feature>
<feature type="modified residue" description="N6-acetyllysine" evidence="1">
    <location>
        <position position="509"/>
    </location>
</feature>
<feature type="modified residue" description="N6-acetyllysine" evidence="1">
    <location>
        <position position="519"/>
    </location>
</feature>
<feature type="modified residue" description="N6-acetyllysine" evidence="1">
    <location>
        <position position="559"/>
    </location>
</feature>
<feature type="modified residue" description="N6-acetyllysine" evidence="1">
    <location>
        <position position="619"/>
    </location>
</feature>
<comment type="function">
    <text evidence="1 3">Regulator of autophagy that promotes autophagosome maturation by facilitating the biogenesis of phosphatidylinositol 3-phosphate (PtdIns(3)P) in late steps of autophagy. Acts by antagonizing RUBCN, thereby stimulating phosphatidylinositol 3-kinase activity of the PI3K/PI3KC3 complex (By similarity). Following anchorage to the autophagosomal SNARE STX17, promotes the recruitment of PI3K/PI3KC3 and HOPS complexes to the autophagosome to regulate the fusion specificity of autophagosomes with late endosomes/lysosomes (By similarity). Binds phosphoinositides phosphatidylinositol 3-phosphate (PtdIns(3)P), 4-phosphate (PtdIns(4)P) and 5-phosphate (PtdIns(5)P) (By similarity). In addition to its role in autophagy, acts as a regulator of lipid and glycogen homeostasis (PubMed:30704899). May act as a tumor suppressor (By similarity).</text>
</comment>
<comment type="subunit">
    <text evidence="1">Interacts with UVRAG; the interaction is direct and promotes association with the PI3K/PI3KC3 and HOPS complexes. Interacts with STX17.</text>
</comment>
<comment type="subcellular location">
    <subcellularLocation>
        <location evidence="1">Cytoplasmic vesicle</location>
        <location evidence="1">Autophagosome membrane</location>
        <topology evidence="1">Peripheral membrane protein</topology>
    </subcellularLocation>
    <text evidence="1">Associates with late autophagic structure. Recruitment to autophagosome membrane is promoted by autophagic stimuli.</text>
</comment>
<comment type="PTM">
    <text evidence="1">Phosphorylated by MTOR at Ser-144 under nutrient-rich conditions. Phosphorylation prevents acetylation by KAT5/TIP60 and impairs RUBCNL/PACER function and autophagosome maturation. Under autophagy induction, Phosphorylation by MTOR is repressed, enabling acetylation by KAT5/TIP60.</text>
</comment>
<comment type="PTM">
    <text evidence="1 3">Acetylated by KAT5/TIP60 under autophagy induction, promoting autophagosome maturation and lipid metabolism (PubMed:30704899). Acetylation is prevented by phosphorylation by MTOR (By similarity). Lys-469 and Lys-559 constitute the key sites for tuning function in autophagy (By similarity).</text>
</comment>
<comment type="disruption phenotype">
    <text evidence="3">Mice display an increase in the ratio of liver to body weight and significantly lower total ketone bodies in the serum and liver after 24 hours of fasting (PubMed:30704899). Conditional deletion in the liver results in impaired autophagy flux, glycogen and lipid accumulation and liver fibrosis (PubMed:30704899).</text>
</comment>
<comment type="sequence caution" evidence="5">
    <conflict type="erroneous initiation">
        <sequence resource="EMBL-CDS" id="BAE41789"/>
    </conflict>
</comment>
<organism>
    <name type="scientific">Mus musculus</name>
    <name type="common">Mouse</name>
    <dbReference type="NCBI Taxonomy" id="10090"/>
    <lineage>
        <taxon>Eukaryota</taxon>
        <taxon>Metazoa</taxon>
        <taxon>Chordata</taxon>
        <taxon>Craniata</taxon>
        <taxon>Vertebrata</taxon>
        <taxon>Euteleostomi</taxon>
        <taxon>Mammalia</taxon>
        <taxon>Eutheria</taxon>
        <taxon>Euarchontoglires</taxon>
        <taxon>Glires</taxon>
        <taxon>Rodentia</taxon>
        <taxon>Myomorpha</taxon>
        <taxon>Muroidea</taxon>
        <taxon>Muridae</taxon>
        <taxon>Murinae</taxon>
        <taxon>Mus</taxon>
        <taxon>Mus</taxon>
    </lineage>
</organism>
<dbReference type="EMBL" id="AK170426">
    <property type="protein sequence ID" value="BAE41789.1"/>
    <property type="status" value="ALT_INIT"/>
    <property type="molecule type" value="mRNA"/>
</dbReference>
<dbReference type="SMR" id="Q3TD16"/>
<dbReference type="FunCoup" id="Q3TD16">
    <property type="interactions" value="511"/>
</dbReference>
<dbReference type="STRING" id="10090.ENSMUSP00000045566"/>
<dbReference type="iPTMnet" id="Q3TD16"/>
<dbReference type="PhosphoSitePlus" id="Q3TD16"/>
<dbReference type="PaxDb" id="10090-ENSMUSP00000045566"/>
<dbReference type="ProteomicsDB" id="256642"/>
<dbReference type="AGR" id="MGI:2685590"/>
<dbReference type="MGI" id="MGI:2685590">
    <property type="gene designation" value="Rubcnl"/>
</dbReference>
<dbReference type="eggNOG" id="KOG1829">
    <property type="taxonomic scope" value="Eukaryota"/>
</dbReference>
<dbReference type="InParanoid" id="Q3TD16"/>
<dbReference type="PhylomeDB" id="Q3TD16"/>
<dbReference type="PRO" id="PR:Q3TD16"/>
<dbReference type="Proteomes" id="UP000000589">
    <property type="component" value="Unplaced"/>
</dbReference>
<dbReference type="RNAct" id="Q3TD16">
    <property type="molecule type" value="protein"/>
</dbReference>
<dbReference type="GO" id="GO:0000421">
    <property type="term" value="C:autophagosome membrane"/>
    <property type="evidence" value="ECO:0000250"/>
    <property type="project" value="UniProtKB"/>
</dbReference>
<dbReference type="GO" id="GO:0031410">
    <property type="term" value="C:cytoplasmic vesicle"/>
    <property type="evidence" value="ECO:0007669"/>
    <property type="project" value="UniProtKB-KW"/>
</dbReference>
<dbReference type="GO" id="GO:0032266">
    <property type="term" value="F:phosphatidylinositol-3-phosphate binding"/>
    <property type="evidence" value="ECO:0000250"/>
    <property type="project" value="UniProtKB"/>
</dbReference>
<dbReference type="GO" id="GO:0070273">
    <property type="term" value="F:phosphatidylinositol-4-phosphate binding"/>
    <property type="evidence" value="ECO:0000250"/>
    <property type="project" value="UniProtKB"/>
</dbReference>
<dbReference type="GO" id="GO:0010314">
    <property type="term" value="F:phosphatidylinositol-5-phosphate binding"/>
    <property type="evidence" value="ECO:0000250"/>
    <property type="project" value="UniProtKB"/>
</dbReference>
<dbReference type="GO" id="GO:0097352">
    <property type="term" value="P:autophagosome maturation"/>
    <property type="evidence" value="ECO:0000315"/>
    <property type="project" value="UniProtKB"/>
</dbReference>
<dbReference type="GO" id="GO:0061909">
    <property type="term" value="P:autophagosome-lysosome fusion"/>
    <property type="evidence" value="ECO:0000250"/>
    <property type="project" value="UniProtKB"/>
</dbReference>
<dbReference type="GO" id="GO:0006629">
    <property type="term" value="P:lipid metabolic process"/>
    <property type="evidence" value="ECO:0007669"/>
    <property type="project" value="UniProtKB-KW"/>
</dbReference>
<dbReference type="GO" id="GO:0070873">
    <property type="term" value="P:regulation of glycogen metabolic process"/>
    <property type="evidence" value="ECO:0000315"/>
    <property type="project" value="UniProtKB"/>
</dbReference>
<dbReference type="GO" id="GO:0019216">
    <property type="term" value="P:regulation of lipid metabolic process"/>
    <property type="evidence" value="ECO:0000315"/>
    <property type="project" value="UniProtKB"/>
</dbReference>
<dbReference type="InterPro" id="IPR052428">
    <property type="entry name" value="Autophagy_HostDef_Reg"/>
</dbReference>
<dbReference type="InterPro" id="IPR025258">
    <property type="entry name" value="RH_dom"/>
</dbReference>
<dbReference type="InterPro" id="IPR048569">
    <property type="entry name" value="RUBC_PIKBD"/>
</dbReference>
<dbReference type="PANTHER" id="PTHR45971">
    <property type="entry name" value="PHOX (PX) DOMAIN-CONTAINING PROTEIN"/>
    <property type="match status" value="1"/>
</dbReference>
<dbReference type="PANTHER" id="PTHR45971:SF2">
    <property type="entry name" value="PROTEIN ASSOCIATED WITH UVRAG AS AUTOPHAGY ENHANCER"/>
    <property type="match status" value="1"/>
</dbReference>
<dbReference type="Pfam" id="PF13901">
    <property type="entry name" value="RH_dom"/>
    <property type="match status" value="1"/>
</dbReference>
<dbReference type="Pfam" id="PF21054">
    <property type="entry name" value="RUBC_PIKBD"/>
    <property type="match status" value="1"/>
</dbReference>
<dbReference type="SMART" id="SM01175">
    <property type="entry name" value="DUF4206"/>
    <property type="match status" value="1"/>
</dbReference>
<reference key="1">
    <citation type="journal article" date="2005" name="Science">
        <title>The transcriptional landscape of the mammalian genome.</title>
        <authorList>
            <person name="Carninci P."/>
            <person name="Kasukawa T."/>
            <person name="Katayama S."/>
            <person name="Gough J."/>
            <person name="Frith M.C."/>
            <person name="Maeda N."/>
            <person name="Oyama R."/>
            <person name="Ravasi T."/>
            <person name="Lenhard B."/>
            <person name="Wells C."/>
            <person name="Kodzius R."/>
            <person name="Shimokawa K."/>
            <person name="Bajic V.B."/>
            <person name="Brenner S.E."/>
            <person name="Batalov S."/>
            <person name="Forrest A.R."/>
            <person name="Zavolan M."/>
            <person name="Davis M.J."/>
            <person name="Wilming L.G."/>
            <person name="Aidinis V."/>
            <person name="Allen J.E."/>
            <person name="Ambesi-Impiombato A."/>
            <person name="Apweiler R."/>
            <person name="Aturaliya R.N."/>
            <person name="Bailey T.L."/>
            <person name="Bansal M."/>
            <person name="Baxter L."/>
            <person name="Beisel K.W."/>
            <person name="Bersano T."/>
            <person name="Bono H."/>
            <person name="Chalk A.M."/>
            <person name="Chiu K.P."/>
            <person name="Choudhary V."/>
            <person name="Christoffels A."/>
            <person name="Clutterbuck D.R."/>
            <person name="Crowe M.L."/>
            <person name="Dalla E."/>
            <person name="Dalrymple B.P."/>
            <person name="de Bono B."/>
            <person name="Della Gatta G."/>
            <person name="di Bernardo D."/>
            <person name="Down T."/>
            <person name="Engstrom P."/>
            <person name="Fagiolini M."/>
            <person name="Faulkner G."/>
            <person name="Fletcher C.F."/>
            <person name="Fukushima T."/>
            <person name="Furuno M."/>
            <person name="Futaki S."/>
            <person name="Gariboldi M."/>
            <person name="Georgii-Hemming P."/>
            <person name="Gingeras T.R."/>
            <person name="Gojobori T."/>
            <person name="Green R.E."/>
            <person name="Gustincich S."/>
            <person name="Harbers M."/>
            <person name="Hayashi Y."/>
            <person name="Hensch T.K."/>
            <person name="Hirokawa N."/>
            <person name="Hill D."/>
            <person name="Huminiecki L."/>
            <person name="Iacono M."/>
            <person name="Ikeo K."/>
            <person name="Iwama A."/>
            <person name="Ishikawa T."/>
            <person name="Jakt M."/>
            <person name="Kanapin A."/>
            <person name="Katoh M."/>
            <person name="Kawasawa Y."/>
            <person name="Kelso J."/>
            <person name="Kitamura H."/>
            <person name="Kitano H."/>
            <person name="Kollias G."/>
            <person name="Krishnan S.P."/>
            <person name="Kruger A."/>
            <person name="Kummerfeld S.K."/>
            <person name="Kurochkin I.V."/>
            <person name="Lareau L.F."/>
            <person name="Lazarevic D."/>
            <person name="Lipovich L."/>
            <person name="Liu J."/>
            <person name="Liuni S."/>
            <person name="McWilliam S."/>
            <person name="Madan Babu M."/>
            <person name="Madera M."/>
            <person name="Marchionni L."/>
            <person name="Matsuda H."/>
            <person name="Matsuzawa S."/>
            <person name="Miki H."/>
            <person name="Mignone F."/>
            <person name="Miyake S."/>
            <person name="Morris K."/>
            <person name="Mottagui-Tabar S."/>
            <person name="Mulder N."/>
            <person name="Nakano N."/>
            <person name="Nakauchi H."/>
            <person name="Ng P."/>
            <person name="Nilsson R."/>
            <person name="Nishiguchi S."/>
            <person name="Nishikawa S."/>
            <person name="Nori F."/>
            <person name="Ohara O."/>
            <person name="Okazaki Y."/>
            <person name="Orlando V."/>
            <person name="Pang K.C."/>
            <person name="Pavan W.J."/>
            <person name="Pavesi G."/>
            <person name="Pesole G."/>
            <person name="Petrovsky N."/>
            <person name="Piazza S."/>
            <person name="Reed J."/>
            <person name="Reid J.F."/>
            <person name="Ring B.Z."/>
            <person name="Ringwald M."/>
            <person name="Rost B."/>
            <person name="Ruan Y."/>
            <person name="Salzberg S.L."/>
            <person name="Sandelin A."/>
            <person name="Schneider C."/>
            <person name="Schoenbach C."/>
            <person name="Sekiguchi K."/>
            <person name="Semple C.A."/>
            <person name="Seno S."/>
            <person name="Sessa L."/>
            <person name="Sheng Y."/>
            <person name="Shibata Y."/>
            <person name="Shimada H."/>
            <person name="Shimada K."/>
            <person name="Silva D."/>
            <person name="Sinclair B."/>
            <person name="Sperling S."/>
            <person name="Stupka E."/>
            <person name="Sugiura K."/>
            <person name="Sultana R."/>
            <person name="Takenaka Y."/>
            <person name="Taki K."/>
            <person name="Tammoja K."/>
            <person name="Tan S.L."/>
            <person name="Tang S."/>
            <person name="Taylor M.S."/>
            <person name="Tegner J."/>
            <person name="Teichmann S.A."/>
            <person name="Ueda H.R."/>
            <person name="van Nimwegen E."/>
            <person name="Verardo R."/>
            <person name="Wei C.L."/>
            <person name="Yagi K."/>
            <person name="Yamanishi H."/>
            <person name="Zabarovsky E."/>
            <person name="Zhu S."/>
            <person name="Zimmer A."/>
            <person name="Hide W."/>
            <person name="Bult C."/>
            <person name="Grimmond S.M."/>
            <person name="Teasdale R.D."/>
            <person name="Liu E.T."/>
            <person name="Brusic V."/>
            <person name="Quackenbush J."/>
            <person name="Wahlestedt C."/>
            <person name="Mattick J.S."/>
            <person name="Hume D.A."/>
            <person name="Kai C."/>
            <person name="Sasaki D."/>
            <person name="Tomaru Y."/>
            <person name="Fukuda S."/>
            <person name="Kanamori-Katayama M."/>
            <person name="Suzuki M."/>
            <person name="Aoki J."/>
            <person name="Arakawa T."/>
            <person name="Iida J."/>
            <person name="Imamura K."/>
            <person name="Itoh M."/>
            <person name="Kato T."/>
            <person name="Kawaji H."/>
            <person name="Kawagashira N."/>
            <person name="Kawashima T."/>
            <person name="Kojima M."/>
            <person name="Kondo S."/>
            <person name="Konno H."/>
            <person name="Nakano K."/>
            <person name="Ninomiya N."/>
            <person name="Nishio T."/>
            <person name="Okada M."/>
            <person name="Plessy C."/>
            <person name="Shibata K."/>
            <person name="Shiraki T."/>
            <person name="Suzuki S."/>
            <person name="Tagami M."/>
            <person name="Waki K."/>
            <person name="Watahiki A."/>
            <person name="Okamura-Oho Y."/>
            <person name="Suzuki H."/>
            <person name="Kawai J."/>
            <person name="Hayashizaki Y."/>
        </authorList>
    </citation>
    <scope>NUCLEOTIDE SEQUENCE [LARGE SCALE MRNA]</scope>
    <source>
        <strain>NOD</strain>
    </source>
</reference>
<reference key="2">
    <citation type="journal article" date="2009" name="Immunity">
        <title>The phagosomal proteome in interferon-gamma-activated macrophages.</title>
        <authorList>
            <person name="Trost M."/>
            <person name="English L."/>
            <person name="Lemieux S."/>
            <person name="Courcelles M."/>
            <person name="Desjardins M."/>
            <person name="Thibault P."/>
        </authorList>
    </citation>
    <scope>IDENTIFICATION BY MASS SPECTROMETRY [LARGE SCALE ANALYSIS]</scope>
</reference>
<reference key="3">
    <citation type="journal article" date="2010" name="Cell">
        <title>A tissue-specific atlas of mouse protein phosphorylation and expression.</title>
        <authorList>
            <person name="Huttlin E.L."/>
            <person name="Jedrychowski M.P."/>
            <person name="Elias J.E."/>
            <person name="Goswami T."/>
            <person name="Rad R."/>
            <person name="Beausoleil S.A."/>
            <person name="Villen J."/>
            <person name="Haas W."/>
            <person name="Sowa M.E."/>
            <person name="Gygi S.P."/>
        </authorList>
    </citation>
    <scope>IDENTIFICATION BY MASS SPECTROMETRY [LARGE SCALE ANALYSIS]</scope>
    <source>
        <tissue>Spleen</tissue>
    </source>
</reference>
<reference key="4">
    <citation type="journal article" date="2019" name="Mol. Cell">
        <title>Pacer is a mediator of mTORC1 and GSK3-TIP60 signaling in regulation of autophagosome maturation and lipid metabolism.</title>
        <authorList>
            <person name="Cheng X."/>
            <person name="Ma X."/>
            <person name="Zhu Q."/>
            <person name="Song D."/>
            <person name="Ding X."/>
            <person name="Li L."/>
            <person name="Jiang X."/>
            <person name="Wang X."/>
            <person name="Tian R."/>
            <person name="Su H."/>
            <person name="Shen Z."/>
            <person name="Chen S."/>
            <person name="Liu T."/>
            <person name="Gong W."/>
            <person name="Liu W."/>
            <person name="Sun Q."/>
        </authorList>
    </citation>
    <scope>FUNCTION</scope>
    <scope>DISRUPTION PHENOTYPE</scope>
    <scope>ACETYLATION</scope>
</reference>
<keyword id="KW-0007">Acetylation</keyword>
<keyword id="KW-0072">Autophagy</keyword>
<keyword id="KW-0968">Cytoplasmic vesicle</keyword>
<keyword id="KW-0443">Lipid metabolism</keyword>
<keyword id="KW-0446">Lipid-binding</keyword>
<keyword id="KW-0472">Membrane</keyword>
<keyword id="KW-0597">Phosphoprotein</keyword>
<keyword id="KW-1185">Reference proteome</keyword>
<protein>
    <recommendedName>
        <fullName evidence="4">Protein associated with UVRAG as autophagy enhancer</fullName>
        <shortName evidence="4">Pacer</shortName>
    </recommendedName>
    <alternativeName>
        <fullName evidence="5">Protein Rubicon-like</fullName>
    </alternativeName>
</protein>
<name>PACER_MOUSE</name>
<accession>Q3TD16</accession>
<sequence length="648" mass="72279">MVSQSIGWGDSPVDLCEGSNRAFQDTDQPACQLDVRLLRHKASWINPLCVQQPLQELCPQRPTVQSSENHVVLDTPSPLRLSILSYRDSLAEMPLSENTADVICSNSAHCSGGKEGDFFLATEEQEVHLQQESLLKNPKTVATSPSPKEGSARSESPHLTASTDDGDARSSSRSHAWNFFPLETFMLPADVEKENLHFYAADIIISVIENMKCNLPNQQQPERWDTEDASRLRGTGAEMTFYTHIKQEPGSSASSHTGCEGCAALQVSPVAETLSYCPVAGEACKHDLNKLVMLELGKYNDITKGCRCSYNSSKSATCESNLSPAGCLARELFRGFCKCWMLSEVNCQLPGSPTTASSGVGDEEYAEEDFDSSVDAAREVMLKSRVPGTEDWVLPRCQIILTVHPPIKRDIAVVAQNFFCAGCGTPIQPKFVKRLRYCEYLGKYFCASCHSSAESCIPARILTMWDFRKYQVSDFSKWLLDSVWHQPVFKLLGGHHSLYAKAKELDRVKDLQEQLFHIKKLLKTCRFADSVLKEFEQVPSHLTDECHIFSMDDFLRTKKGLLAPLLKDILRASLAHVDSCELCQGKGFICEFCQSTTVIFPFQTTTCRRCAACRACFHKQCFQSSRCPRCARIIARRQHLESLPTAAT</sequence>
<proteinExistence type="evidence at protein level"/>